<proteinExistence type="inferred from homology"/>
<feature type="chain" id="PRO_0000258826" description="UPF0301 protein FTL_1216">
    <location>
        <begin position="1"/>
        <end position="194"/>
    </location>
</feature>
<protein>
    <recommendedName>
        <fullName evidence="1">UPF0301 protein FTL_1216</fullName>
    </recommendedName>
</protein>
<evidence type="ECO:0000255" key="1">
    <source>
        <dbReference type="HAMAP-Rule" id="MF_00758"/>
    </source>
</evidence>
<accession>Q2A303</accession>
<sequence length="194" mass="22196">MYQNHKSEILLATPLIKDDIVFTKSVVYLCQNDRHGAMGLIINKPLADTLKDVFEELHIPHTNTFKEILEYPLYMGGPISPHKIMILHTTNGRNYTSTIKLDEGLAITASIDILEDIANNILPEYFLPVVGYSCWTANQLTDEIKSNDWIVTNKLNKKILFNHENKVKWQNHLEHAGYTLQSLDTLFNRNTGNC</sequence>
<name>Y1216_FRATH</name>
<gene>
    <name type="ordered locus">FTL_1216</name>
</gene>
<organism>
    <name type="scientific">Francisella tularensis subsp. holarctica (strain LVS)</name>
    <dbReference type="NCBI Taxonomy" id="376619"/>
    <lineage>
        <taxon>Bacteria</taxon>
        <taxon>Pseudomonadati</taxon>
        <taxon>Pseudomonadota</taxon>
        <taxon>Gammaproteobacteria</taxon>
        <taxon>Thiotrichales</taxon>
        <taxon>Francisellaceae</taxon>
        <taxon>Francisella</taxon>
    </lineage>
</organism>
<reference key="1">
    <citation type="submission" date="2006-03" db="EMBL/GenBank/DDBJ databases">
        <title>Complete genome sequence of Francisella tularensis LVS (Live Vaccine Strain).</title>
        <authorList>
            <person name="Chain P."/>
            <person name="Larimer F."/>
            <person name="Land M."/>
            <person name="Stilwagen S."/>
            <person name="Larsson P."/>
            <person name="Bearden S."/>
            <person name="Chu M."/>
            <person name="Oyston P."/>
            <person name="Forsman M."/>
            <person name="Andersson S."/>
            <person name="Lindler L."/>
            <person name="Titball R."/>
            <person name="Garcia E."/>
        </authorList>
    </citation>
    <scope>NUCLEOTIDE SEQUENCE [LARGE SCALE GENOMIC DNA]</scope>
    <source>
        <strain>LVS</strain>
    </source>
</reference>
<comment type="similarity">
    <text evidence="1">Belongs to the UPF0301 (AlgH) family.</text>
</comment>
<dbReference type="EMBL" id="AM233362">
    <property type="protein sequence ID" value="CAJ79655.1"/>
    <property type="molecule type" value="Genomic_DNA"/>
</dbReference>
<dbReference type="RefSeq" id="WP_003021066.1">
    <property type="nucleotide sequence ID" value="NZ_CP009694.1"/>
</dbReference>
<dbReference type="SMR" id="Q2A303"/>
<dbReference type="KEGG" id="ftl:FTL_1216"/>
<dbReference type="Proteomes" id="UP000001944">
    <property type="component" value="Chromosome"/>
</dbReference>
<dbReference type="GO" id="GO:0005829">
    <property type="term" value="C:cytosol"/>
    <property type="evidence" value="ECO:0007669"/>
    <property type="project" value="TreeGrafter"/>
</dbReference>
<dbReference type="Gene3D" id="3.40.1740.10">
    <property type="entry name" value="VC0467-like"/>
    <property type="match status" value="1"/>
</dbReference>
<dbReference type="Gene3D" id="3.30.70.1300">
    <property type="entry name" value="VC0467-like domains"/>
    <property type="match status" value="1"/>
</dbReference>
<dbReference type="HAMAP" id="MF_00758">
    <property type="entry name" value="UPF0301"/>
    <property type="match status" value="1"/>
</dbReference>
<dbReference type="InterPro" id="IPR003774">
    <property type="entry name" value="AlgH-like"/>
</dbReference>
<dbReference type="PANTHER" id="PTHR30327">
    <property type="entry name" value="UNCHARACTERIZED PROTEIN YQGE"/>
    <property type="match status" value="1"/>
</dbReference>
<dbReference type="PANTHER" id="PTHR30327:SF1">
    <property type="entry name" value="UPF0301 PROTEIN YQGE"/>
    <property type="match status" value="1"/>
</dbReference>
<dbReference type="Pfam" id="PF02622">
    <property type="entry name" value="DUF179"/>
    <property type="match status" value="1"/>
</dbReference>
<dbReference type="SUPFAM" id="SSF143456">
    <property type="entry name" value="VC0467-like"/>
    <property type="match status" value="1"/>
</dbReference>
<keyword id="KW-1185">Reference proteome</keyword>